<gene>
    <name type="primary">tas3</name>
    <name type="ORF">SPBC83.03c</name>
</gene>
<feature type="chain" id="PRO_0000256153" description="RNA-induced transcriptional silencing complex protein tas3">
    <location>
        <begin position="1"/>
        <end position="549"/>
    </location>
</feature>
<feature type="region of interest" description="Disordered" evidence="1">
    <location>
        <begin position="89"/>
        <end position="111"/>
    </location>
</feature>
<feature type="region of interest" description="Disordered" evidence="1">
    <location>
        <begin position="126"/>
        <end position="184"/>
    </location>
</feature>
<feature type="region of interest" description="Disordered" evidence="1">
    <location>
        <begin position="202"/>
        <end position="225"/>
    </location>
</feature>
<feature type="region of interest" description="Disordered" evidence="1">
    <location>
        <begin position="298"/>
        <end position="361"/>
    </location>
</feature>
<feature type="region of interest" description="Disordered" evidence="1">
    <location>
        <begin position="381"/>
        <end position="430"/>
    </location>
</feature>
<feature type="compositionally biased region" description="Polar residues" evidence="1">
    <location>
        <begin position="298"/>
        <end position="307"/>
    </location>
</feature>
<feature type="compositionally biased region" description="Basic and acidic residues" evidence="1">
    <location>
        <begin position="328"/>
        <end position="361"/>
    </location>
</feature>
<feature type="compositionally biased region" description="Basic and acidic residues" evidence="1">
    <location>
        <begin position="403"/>
        <end position="416"/>
    </location>
</feature>
<feature type="compositionally biased region" description="Polar residues" evidence="1">
    <location>
        <begin position="419"/>
        <end position="430"/>
    </location>
</feature>
<feature type="helix" evidence="5">
    <location>
        <begin position="9"/>
        <end position="11"/>
    </location>
</feature>
<feature type="helix" evidence="5">
    <location>
        <begin position="12"/>
        <end position="17"/>
    </location>
</feature>
<feature type="helix" evidence="5">
    <location>
        <begin position="29"/>
        <end position="49"/>
    </location>
</feature>
<feature type="helix" evidence="5">
    <location>
        <begin position="50"/>
        <end position="53"/>
    </location>
</feature>
<feature type="helix" evidence="5">
    <location>
        <begin position="58"/>
        <end position="79"/>
    </location>
</feature>
<feature type="helix" evidence="4">
    <location>
        <begin position="435"/>
        <end position="444"/>
    </location>
</feature>
<feature type="helix" evidence="4">
    <location>
        <begin position="447"/>
        <end position="450"/>
    </location>
</feature>
<feature type="helix" evidence="4">
    <location>
        <begin position="453"/>
        <end position="467"/>
    </location>
</feature>
<feature type="helix" evidence="4">
    <location>
        <begin position="473"/>
        <end position="481"/>
    </location>
</feature>
<feature type="helix" evidence="4">
    <location>
        <begin position="495"/>
        <end position="505"/>
    </location>
</feature>
<feature type="helix" evidence="4">
    <location>
        <begin position="510"/>
        <end position="526"/>
    </location>
</feature>
<feature type="helix" evidence="4">
    <location>
        <begin position="530"/>
        <end position="543"/>
    </location>
</feature>
<sequence length="549" mass="63056">MEKGIKKYLPSLPFLACISDFPENHGTSRRSATVSLERVHELFTEHWLSNLKNRREKRQELAEEAVYCRSEMLSQRKLLAAVDFPQQLKNSPAKAKATHTSSGVTKEVRASKKYTSSNVEFPLVTDGKEKPVKSKQLRKNSVTEFEKPIETKKSKHRKSRNKFLDKSSGSMEIESWDNSTSDSIIESSSRLHESISLRENDIRSSDSKSVGWDDNSTGFRESSKSLDHTDTSMFMELDSNSDPQFRPKYQAKSSWFAPDDPEASWGNLDDGWGETNGSWSSTDDTKHYKNEWAESINLDNFNRPSQQEDYDKPKNTQVSRSSNHHRRYDSYHPDSRSDSYRSKREHYDNRDTGPRSKHLEKSSYVYNQNFEDRTHLSDHGAHFHLGNANDFNMQGSSRKRKASDRQRESRENELPTKKLNASDSHNPLASLTTDKNDLYINWLKSLSFFQTNSSCAEALVKVIPHYHNKLIDFSQVLQLVFSASEKFPIQENQPLPEQLMFLSNLEKQTPFAKAVGSSIYKLVTGKNLSLDFASQILKEASILEHKNEK</sequence>
<evidence type="ECO:0000256" key="1">
    <source>
        <dbReference type="SAM" id="MobiDB-lite"/>
    </source>
</evidence>
<evidence type="ECO:0000269" key="2">
    <source>
    </source>
</evidence>
<evidence type="ECO:0000269" key="3">
    <source>
    </source>
</evidence>
<evidence type="ECO:0007829" key="4">
    <source>
        <dbReference type="PDB" id="3D1B"/>
    </source>
</evidence>
<evidence type="ECO:0007829" key="5">
    <source>
        <dbReference type="PDB" id="3TIX"/>
    </source>
</evidence>
<dbReference type="EMBL" id="CU329671">
    <property type="protein sequence ID" value="CAB36865.1"/>
    <property type="molecule type" value="Genomic_DNA"/>
</dbReference>
<dbReference type="PIR" id="T40692">
    <property type="entry name" value="T40692"/>
</dbReference>
<dbReference type="RefSeq" id="NP_595635.1">
    <property type="nucleotide sequence ID" value="NM_001021529.2"/>
</dbReference>
<dbReference type="PDB" id="3D1B">
    <property type="method" value="X-ray"/>
    <property type="resolution" value="1.70 A"/>
    <property type="chains" value="A/B/C=426-545"/>
</dbReference>
<dbReference type="PDB" id="3D1D">
    <property type="method" value="X-ray"/>
    <property type="resolution" value="2.60 A"/>
    <property type="chains" value="A/B/C/D/E/F=426-545"/>
</dbReference>
<dbReference type="PDB" id="3TIX">
    <property type="method" value="X-ray"/>
    <property type="resolution" value="2.90 A"/>
    <property type="chains" value="A/C=9-83"/>
</dbReference>
<dbReference type="PDBsum" id="3D1B"/>
<dbReference type="PDBsum" id="3D1D"/>
<dbReference type="PDBsum" id="3TIX"/>
<dbReference type="SMR" id="O94687"/>
<dbReference type="BioGRID" id="277258">
    <property type="interactions" value="313"/>
</dbReference>
<dbReference type="ComplexPortal" id="CPX-25777">
    <property type="entry name" value="RITS transcriptional silencing complex"/>
</dbReference>
<dbReference type="DIP" id="DIP-29302N"/>
<dbReference type="FunCoup" id="O94687">
    <property type="interactions" value="6"/>
</dbReference>
<dbReference type="IntAct" id="O94687">
    <property type="interactions" value="4"/>
</dbReference>
<dbReference type="STRING" id="284812.O94687"/>
<dbReference type="iPTMnet" id="O94687"/>
<dbReference type="PaxDb" id="4896-SPBC83.03c.1"/>
<dbReference type="EnsemblFungi" id="SPBC83.03c.1">
    <property type="protein sequence ID" value="SPBC83.03c.1:pep"/>
    <property type="gene ID" value="SPBC83.03c"/>
</dbReference>
<dbReference type="GeneID" id="2540735"/>
<dbReference type="KEGG" id="spo:2540735"/>
<dbReference type="PomBase" id="SPBC83.03c">
    <property type="gene designation" value="tas3"/>
</dbReference>
<dbReference type="VEuPathDB" id="FungiDB:SPBC83.03c"/>
<dbReference type="HOGENOM" id="CLU_496214_0_0_1"/>
<dbReference type="InParanoid" id="O94687"/>
<dbReference type="OMA" id="EWAESIN"/>
<dbReference type="EvolutionaryTrace" id="O94687"/>
<dbReference type="PRO" id="PR:O94687"/>
<dbReference type="Proteomes" id="UP000002485">
    <property type="component" value="Chromosome II"/>
</dbReference>
<dbReference type="GO" id="GO:0005737">
    <property type="term" value="C:cytoplasm"/>
    <property type="evidence" value="ECO:0007669"/>
    <property type="project" value="UniProtKB-KW"/>
</dbReference>
<dbReference type="GO" id="GO:0031934">
    <property type="term" value="C:mating-type region heterochromatin"/>
    <property type="evidence" value="ECO:0000314"/>
    <property type="project" value="PomBase"/>
</dbReference>
<dbReference type="GO" id="GO:0005634">
    <property type="term" value="C:nucleus"/>
    <property type="evidence" value="ECO:0007005"/>
    <property type="project" value="PomBase"/>
</dbReference>
<dbReference type="GO" id="GO:0005721">
    <property type="term" value="C:pericentric heterochromatin"/>
    <property type="evidence" value="ECO:0000314"/>
    <property type="project" value="PomBase"/>
</dbReference>
<dbReference type="GO" id="GO:0030958">
    <property type="term" value="C:RITS complex"/>
    <property type="evidence" value="ECO:0000314"/>
    <property type="project" value="PomBase"/>
</dbReference>
<dbReference type="GO" id="GO:0005816">
    <property type="term" value="C:spindle pole body"/>
    <property type="evidence" value="ECO:0007669"/>
    <property type="project" value="UniProtKB-SubCell"/>
</dbReference>
<dbReference type="GO" id="GO:0140720">
    <property type="term" value="C:subtelomeric heterochromatin"/>
    <property type="evidence" value="ECO:0000314"/>
    <property type="project" value="PomBase"/>
</dbReference>
<dbReference type="GO" id="GO:0060090">
    <property type="term" value="F:molecular adaptor activity"/>
    <property type="evidence" value="ECO:0000353"/>
    <property type="project" value="PomBase"/>
</dbReference>
<dbReference type="GO" id="GO:0035197">
    <property type="term" value="F:siRNA binding"/>
    <property type="evidence" value="ECO:0000314"/>
    <property type="project" value="PomBase"/>
</dbReference>
<dbReference type="GO" id="GO:0007059">
    <property type="term" value="P:chromosome segregation"/>
    <property type="evidence" value="ECO:0007669"/>
    <property type="project" value="UniProtKB-KW"/>
</dbReference>
<dbReference type="GO" id="GO:0031507">
    <property type="term" value="P:heterochromatin formation"/>
    <property type="evidence" value="ECO:0000315"/>
    <property type="project" value="PomBase"/>
</dbReference>
<dbReference type="GO" id="GO:0031508">
    <property type="term" value="P:pericentric heterochromatin formation"/>
    <property type="evidence" value="ECO:0000269"/>
    <property type="project" value="PomBase"/>
</dbReference>
<dbReference type="GO" id="GO:0030466">
    <property type="term" value="P:silent mating-type cassette heterochromatin formation"/>
    <property type="evidence" value="ECO:0000314"/>
    <property type="project" value="PomBase"/>
</dbReference>
<dbReference type="GO" id="GO:0140727">
    <property type="term" value="P:siRNA-mediated pericentric heterochromatin formation"/>
    <property type="evidence" value="ECO:0000315"/>
    <property type="project" value="PomBase"/>
</dbReference>
<dbReference type="DisProt" id="DP02421"/>
<dbReference type="Gene3D" id="1.20.920.40">
    <property type="match status" value="1"/>
</dbReference>
<dbReference type="Gene3D" id="6.10.140.1690">
    <property type="match status" value="1"/>
</dbReference>
<dbReference type="InterPro" id="IPR049112">
    <property type="entry name" value="Tas3_C"/>
</dbReference>
<dbReference type="Pfam" id="PF22378">
    <property type="entry name" value="Tas3-like_N"/>
    <property type="match status" value="1"/>
</dbReference>
<dbReference type="Pfam" id="PF21487">
    <property type="entry name" value="Tas3_C-hel"/>
    <property type="match status" value="1"/>
</dbReference>
<keyword id="KW-0002">3D-structure</keyword>
<keyword id="KW-0131">Cell cycle</keyword>
<keyword id="KW-0159">Chromosome partition</keyword>
<keyword id="KW-0963">Cytoplasm</keyword>
<keyword id="KW-0206">Cytoskeleton</keyword>
<keyword id="KW-0539">Nucleus</keyword>
<keyword id="KW-1185">Reference proteome</keyword>
<keyword id="KW-0943">RNA-mediated gene silencing</keyword>
<proteinExistence type="evidence at protein level"/>
<reference key="1">
    <citation type="journal article" date="2002" name="Nature">
        <title>The genome sequence of Schizosaccharomyces pombe.</title>
        <authorList>
            <person name="Wood V."/>
            <person name="Gwilliam R."/>
            <person name="Rajandream M.A."/>
            <person name="Lyne M.H."/>
            <person name="Lyne R."/>
            <person name="Stewart A."/>
            <person name="Sgouros J.G."/>
            <person name="Peat N."/>
            <person name="Hayles J."/>
            <person name="Baker S.G."/>
            <person name="Basham D."/>
            <person name="Bowman S."/>
            <person name="Brooks K."/>
            <person name="Brown D."/>
            <person name="Brown S."/>
            <person name="Chillingworth T."/>
            <person name="Churcher C.M."/>
            <person name="Collins M."/>
            <person name="Connor R."/>
            <person name="Cronin A."/>
            <person name="Davis P."/>
            <person name="Feltwell T."/>
            <person name="Fraser A."/>
            <person name="Gentles S."/>
            <person name="Goble A."/>
            <person name="Hamlin N."/>
            <person name="Harris D.E."/>
            <person name="Hidalgo J."/>
            <person name="Hodgson G."/>
            <person name="Holroyd S."/>
            <person name="Hornsby T."/>
            <person name="Howarth S."/>
            <person name="Huckle E.J."/>
            <person name="Hunt S."/>
            <person name="Jagels K."/>
            <person name="James K.D."/>
            <person name="Jones L."/>
            <person name="Jones M."/>
            <person name="Leather S."/>
            <person name="McDonald S."/>
            <person name="McLean J."/>
            <person name="Mooney P."/>
            <person name="Moule S."/>
            <person name="Mungall K.L."/>
            <person name="Murphy L.D."/>
            <person name="Niblett D."/>
            <person name="Odell C."/>
            <person name="Oliver K."/>
            <person name="O'Neil S."/>
            <person name="Pearson D."/>
            <person name="Quail M.A."/>
            <person name="Rabbinowitsch E."/>
            <person name="Rutherford K.M."/>
            <person name="Rutter S."/>
            <person name="Saunders D."/>
            <person name="Seeger K."/>
            <person name="Sharp S."/>
            <person name="Skelton J."/>
            <person name="Simmonds M.N."/>
            <person name="Squares R."/>
            <person name="Squares S."/>
            <person name="Stevens K."/>
            <person name="Taylor K."/>
            <person name="Taylor R.G."/>
            <person name="Tivey A."/>
            <person name="Walsh S.V."/>
            <person name="Warren T."/>
            <person name="Whitehead S."/>
            <person name="Woodward J.R."/>
            <person name="Volckaert G."/>
            <person name="Aert R."/>
            <person name="Robben J."/>
            <person name="Grymonprez B."/>
            <person name="Weltjens I."/>
            <person name="Vanstreels E."/>
            <person name="Rieger M."/>
            <person name="Schaefer M."/>
            <person name="Mueller-Auer S."/>
            <person name="Gabel C."/>
            <person name="Fuchs M."/>
            <person name="Duesterhoeft A."/>
            <person name="Fritzc C."/>
            <person name="Holzer E."/>
            <person name="Moestl D."/>
            <person name="Hilbert H."/>
            <person name="Borzym K."/>
            <person name="Langer I."/>
            <person name="Beck A."/>
            <person name="Lehrach H."/>
            <person name="Reinhardt R."/>
            <person name="Pohl T.M."/>
            <person name="Eger P."/>
            <person name="Zimmermann W."/>
            <person name="Wedler H."/>
            <person name="Wambutt R."/>
            <person name="Purnelle B."/>
            <person name="Goffeau A."/>
            <person name="Cadieu E."/>
            <person name="Dreano S."/>
            <person name="Gloux S."/>
            <person name="Lelaure V."/>
            <person name="Mottier S."/>
            <person name="Galibert F."/>
            <person name="Aves S.J."/>
            <person name="Xiang Z."/>
            <person name="Hunt C."/>
            <person name="Moore K."/>
            <person name="Hurst S.M."/>
            <person name="Lucas M."/>
            <person name="Rochet M."/>
            <person name="Gaillardin C."/>
            <person name="Tallada V.A."/>
            <person name="Garzon A."/>
            <person name="Thode G."/>
            <person name="Daga R.R."/>
            <person name="Cruzado L."/>
            <person name="Jimenez J."/>
            <person name="Sanchez M."/>
            <person name="del Rey F."/>
            <person name="Benito J."/>
            <person name="Dominguez A."/>
            <person name="Revuelta J.L."/>
            <person name="Moreno S."/>
            <person name="Armstrong J."/>
            <person name="Forsburg S.L."/>
            <person name="Cerutti L."/>
            <person name="Lowe T."/>
            <person name="McCombie W.R."/>
            <person name="Paulsen I."/>
            <person name="Potashkin J."/>
            <person name="Shpakovski G.V."/>
            <person name="Ussery D."/>
            <person name="Barrell B.G."/>
            <person name="Nurse P."/>
        </authorList>
    </citation>
    <scope>NUCLEOTIDE SEQUENCE [LARGE SCALE GENOMIC DNA]</scope>
    <source>
        <strain>972 / ATCC 24843</strain>
    </source>
</reference>
<reference key="2">
    <citation type="journal article" date="2004" name="Cell">
        <title>Two RNAi complexes, RITS and RDRC, physically interact and localize to noncoding centromeric RNAs.</title>
        <authorList>
            <person name="Motamedi M.R."/>
            <person name="Verdel A."/>
            <person name="Colmenares S.U."/>
            <person name="Gerber S.A."/>
            <person name="Gygi S.P."/>
            <person name="Moazed D."/>
        </authorList>
    </citation>
    <scope>FUNCTION</scope>
    <scope>COMPOSITION OF THE RDRC AND RITS COMPLEXES</scope>
    <scope>SUBCELLULAR LOCATION</scope>
    <scope>IDENTIFICATION BY MASS SPECTROMETRY</scope>
</reference>
<reference key="3">
    <citation type="journal article" date="2004" name="Science">
        <title>RNAi-mediated targeting of heterochromatin by the RITS complex.</title>
        <authorList>
            <person name="Verdel A."/>
            <person name="Jia S."/>
            <person name="Gerber S."/>
            <person name="Sugiyama T."/>
            <person name="Gygi S.P."/>
            <person name="Grewal S.I.S."/>
            <person name="Moazed D."/>
        </authorList>
    </citation>
    <scope>FUNCTION</scope>
    <scope>COMPOSITION OF THE RITS COMPLEX</scope>
    <scope>INTERACTION WITH CHP1</scope>
</reference>
<reference key="4">
    <citation type="journal article" date="2006" name="Nat. Biotechnol.">
        <title>ORFeome cloning and global analysis of protein localization in the fission yeast Schizosaccharomyces pombe.</title>
        <authorList>
            <person name="Matsuyama A."/>
            <person name="Arai R."/>
            <person name="Yashiroda Y."/>
            <person name="Shirai A."/>
            <person name="Kamata A."/>
            <person name="Sekido S."/>
            <person name="Kobayashi Y."/>
            <person name="Hashimoto A."/>
            <person name="Hamamoto M."/>
            <person name="Hiraoka Y."/>
            <person name="Horinouchi S."/>
            <person name="Yoshida M."/>
        </authorList>
    </citation>
    <scope>SUBCELLULAR LOCATION [LARGE SCALE ANALYSIS]</scope>
</reference>
<name>TAS3_SCHPO</name>
<comment type="function">
    <text evidence="2 3">Has a role in the RNA interference (RNAi) pathway which is important for heterochromatin formation and accurate chromosome segregation. A member of the RNA-induced transcriptional silencing (RITS) complex which is involved in the biosynthesis of dsRNA from primer siRNAs provided by the RNA-directed RNA polymerase (RDRC) complex.</text>
</comment>
<comment type="subunit">
    <text evidence="2">Ago1, chp1 and tas3 interact to form the core of the RNA-induced transcriptional silencing (RITS) complex. The RITS complex interacts with the RDRC complex via interaction between ago1 and hrr1. Clr4 has a role in mediating this interaction.</text>
</comment>
<comment type="interaction">
    <interactant intactId="EBI-423002">
        <id>O94687</id>
    </interactant>
    <interactant intactId="EBI-422882">
        <id>O74957</id>
        <label>ago1</label>
    </interactant>
    <organismsDiffer>false</organismsDiffer>
    <experiments>5</experiments>
</comment>
<comment type="interaction">
    <interactant intactId="EBI-423002">
        <id>O94687</id>
    </interactant>
    <interactant intactId="EBI-421832">
        <id>Q10103</id>
        <label>chp1</label>
    </interactant>
    <organismsDiffer>false</organismsDiffer>
    <experiments>10</experiments>
</comment>
<comment type="interaction">
    <interactant intactId="EBI-423002">
        <id>O94687</id>
    </interactant>
    <interactant intactId="EBI-15624169">
        <id>O74465</id>
        <label>hrr1</label>
    </interactant>
    <organismsDiffer>false</organismsDiffer>
    <experiments>2</experiments>
</comment>
<comment type="subcellular location">
    <subcellularLocation>
        <location>Nucleus</location>
    </subcellularLocation>
    <subcellularLocation>
        <location>Cytoplasm</location>
        <location>Cytoskeleton</location>
        <location>Microtubule organizing center</location>
        <location>Spindle pole body</location>
    </subcellularLocation>
</comment>
<accession>O94687</accession>
<protein>
    <recommendedName>
        <fullName>RNA-induced transcriptional silencing complex protein tas3</fullName>
        <shortName>RITS protein tas3</shortName>
    </recommendedName>
</protein>
<organism>
    <name type="scientific">Schizosaccharomyces pombe (strain 972 / ATCC 24843)</name>
    <name type="common">Fission yeast</name>
    <dbReference type="NCBI Taxonomy" id="284812"/>
    <lineage>
        <taxon>Eukaryota</taxon>
        <taxon>Fungi</taxon>
        <taxon>Dikarya</taxon>
        <taxon>Ascomycota</taxon>
        <taxon>Taphrinomycotina</taxon>
        <taxon>Schizosaccharomycetes</taxon>
        <taxon>Schizosaccharomycetales</taxon>
        <taxon>Schizosaccharomycetaceae</taxon>
        <taxon>Schizosaccharomyces</taxon>
    </lineage>
</organism>